<sequence>MNINATLFAQIIVFFGLVWFTMKFVWPPIAKALDERAAKIAEGLAAAERGKSDFEQAEKKVAELLAEGRNQVSEMVANAEKRAAKIVEEAKEQASSEAARIAAQAKADVEQELFRARESLRDQVAVLAVKGAESILRSEVDASKHAKLLDTLKQEL</sequence>
<proteinExistence type="inferred from homology"/>
<protein>
    <recommendedName>
        <fullName evidence="1">ATP synthase subunit b</fullName>
    </recommendedName>
    <alternativeName>
        <fullName evidence="1">ATP synthase F(0) sector subunit b</fullName>
    </alternativeName>
    <alternativeName>
        <fullName evidence="1">ATPase subunit I</fullName>
    </alternativeName>
    <alternativeName>
        <fullName evidence="1">F-type ATPase subunit b</fullName>
        <shortName evidence="1">F-ATPase subunit b</shortName>
    </alternativeName>
</protein>
<comment type="function">
    <text evidence="1">F(1)F(0) ATP synthase produces ATP from ADP in the presence of a proton or sodium gradient. F-type ATPases consist of two structural domains, F(1) containing the extramembraneous catalytic core and F(0) containing the membrane proton channel, linked together by a central stalk and a peripheral stalk. During catalysis, ATP synthesis in the catalytic domain of F(1) is coupled via a rotary mechanism of the central stalk subunits to proton translocation.</text>
</comment>
<comment type="function">
    <text evidence="1">Component of the F(0) channel, it forms part of the peripheral stalk, linking F(1) to F(0).</text>
</comment>
<comment type="subunit">
    <text evidence="1">F-type ATPases have 2 components, F(1) - the catalytic core - and F(0) - the membrane proton channel. F(1) has five subunits: alpha(3), beta(3), gamma(1), delta(1), epsilon(1). F(0) has three main subunits: a(1), b(2) and c(10-14). The alpha and beta chains form an alternating ring which encloses part of the gamma chain. F(1) is attached to F(0) by a central stalk formed by the gamma and epsilon chains, while a peripheral stalk is formed by the delta and b chains.</text>
</comment>
<comment type="subcellular location">
    <subcellularLocation>
        <location evidence="1">Cell inner membrane</location>
        <topology evidence="1">Single-pass membrane protein</topology>
    </subcellularLocation>
</comment>
<comment type="similarity">
    <text evidence="1">Belongs to the ATPase B chain family.</text>
</comment>
<keyword id="KW-0066">ATP synthesis</keyword>
<keyword id="KW-0997">Cell inner membrane</keyword>
<keyword id="KW-1003">Cell membrane</keyword>
<keyword id="KW-0138">CF(0)</keyword>
<keyword id="KW-0375">Hydrogen ion transport</keyword>
<keyword id="KW-0406">Ion transport</keyword>
<keyword id="KW-0472">Membrane</keyword>
<keyword id="KW-0812">Transmembrane</keyword>
<keyword id="KW-1133">Transmembrane helix</keyword>
<keyword id="KW-0813">Transport</keyword>
<reference key="1">
    <citation type="journal article" date="2008" name="J. Bacteriol.">
        <title>Complete genome sequence of Neisseria gonorrhoeae NCCP11945.</title>
        <authorList>
            <person name="Chung G.T."/>
            <person name="Yoo J.S."/>
            <person name="Oh H.B."/>
            <person name="Lee Y.S."/>
            <person name="Cha S.H."/>
            <person name="Kim S.J."/>
            <person name="Yoo C.K."/>
        </authorList>
    </citation>
    <scope>NUCLEOTIDE SEQUENCE [LARGE SCALE GENOMIC DNA]</scope>
    <source>
        <strain>NCCP11945</strain>
    </source>
</reference>
<dbReference type="EMBL" id="CP001050">
    <property type="protein sequence ID" value="ACF31221.1"/>
    <property type="molecule type" value="Genomic_DNA"/>
</dbReference>
<dbReference type="RefSeq" id="WP_003687152.1">
    <property type="nucleotide sequence ID" value="NC_011035.1"/>
</dbReference>
<dbReference type="SMR" id="B4RJF6"/>
<dbReference type="KEGG" id="ngk:NGK_2622"/>
<dbReference type="HOGENOM" id="CLU_079215_4_5_4"/>
<dbReference type="Proteomes" id="UP000002564">
    <property type="component" value="Chromosome"/>
</dbReference>
<dbReference type="GO" id="GO:0005886">
    <property type="term" value="C:plasma membrane"/>
    <property type="evidence" value="ECO:0007669"/>
    <property type="project" value="UniProtKB-SubCell"/>
</dbReference>
<dbReference type="GO" id="GO:0045259">
    <property type="term" value="C:proton-transporting ATP synthase complex"/>
    <property type="evidence" value="ECO:0007669"/>
    <property type="project" value="UniProtKB-KW"/>
</dbReference>
<dbReference type="GO" id="GO:0046933">
    <property type="term" value="F:proton-transporting ATP synthase activity, rotational mechanism"/>
    <property type="evidence" value="ECO:0007669"/>
    <property type="project" value="UniProtKB-UniRule"/>
</dbReference>
<dbReference type="GO" id="GO:0046961">
    <property type="term" value="F:proton-transporting ATPase activity, rotational mechanism"/>
    <property type="evidence" value="ECO:0007669"/>
    <property type="project" value="TreeGrafter"/>
</dbReference>
<dbReference type="CDD" id="cd06503">
    <property type="entry name" value="ATP-synt_Fo_b"/>
    <property type="match status" value="1"/>
</dbReference>
<dbReference type="FunFam" id="1.20.5.620:FF:000001">
    <property type="entry name" value="ATP synthase subunit b"/>
    <property type="match status" value="1"/>
</dbReference>
<dbReference type="Gene3D" id="1.20.5.620">
    <property type="entry name" value="F1F0 ATP synthase subunit B, membrane domain"/>
    <property type="match status" value="1"/>
</dbReference>
<dbReference type="HAMAP" id="MF_01398">
    <property type="entry name" value="ATP_synth_b_bprime"/>
    <property type="match status" value="1"/>
</dbReference>
<dbReference type="InterPro" id="IPR028987">
    <property type="entry name" value="ATP_synth_B-like_membr_sf"/>
</dbReference>
<dbReference type="InterPro" id="IPR002146">
    <property type="entry name" value="ATP_synth_b/b'su_bac/chlpt"/>
</dbReference>
<dbReference type="InterPro" id="IPR005864">
    <property type="entry name" value="ATP_synth_F0_bsu_bac"/>
</dbReference>
<dbReference type="InterPro" id="IPR050059">
    <property type="entry name" value="ATP_synthase_B_chain"/>
</dbReference>
<dbReference type="NCBIfam" id="TIGR01144">
    <property type="entry name" value="ATP_synt_b"/>
    <property type="match status" value="1"/>
</dbReference>
<dbReference type="NCBIfam" id="NF004411">
    <property type="entry name" value="PRK05759.1-2"/>
    <property type="match status" value="1"/>
</dbReference>
<dbReference type="PANTHER" id="PTHR33445:SF1">
    <property type="entry name" value="ATP SYNTHASE SUBUNIT B"/>
    <property type="match status" value="1"/>
</dbReference>
<dbReference type="PANTHER" id="PTHR33445">
    <property type="entry name" value="ATP SYNTHASE SUBUNIT B', CHLOROPLASTIC"/>
    <property type="match status" value="1"/>
</dbReference>
<dbReference type="Pfam" id="PF00430">
    <property type="entry name" value="ATP-synt_B"/>
    <property type="match status" value="1"/>
</dbReference>
<dbReference type="SUPFAM" id="SSF81573">
    <property type="entry name" value="F1F0 ATP synthase subunit B, membrane domain"/>
    <property type="match status" value="1"/>
</dbReference>
<evidence type="ECO:0000255" key="1">
    <source>
        <dbReference type="HAMAP-Rule" id="MF_01398"/>
    </source>
</evidence>
<gene>
    <name evidence="1" type="primary">atpF</name>
    <name type="ordered locus">NGK_2622</name>
</gene>
<accession>B4RJF6</accession>
<organism>
    <name type="scientific">Neisseria gonorrhoeae (strain NCCP11945)</name>
    <dbReference type="NCBI Taxonomy" id="521006"/>
    <lineage>
        <taxon>Bacteria</taxon>
        <taxon>Pseudomonadati</taxon>
        <taxon>Pseudomonadota</taxon>
        <taxon>Betaproteobacteria</taxon>
        <taxon>Neisseriales</taxon>
        <taxon>Neisseriaceae</taxon>
        <taxon>Neisseria</taxon>
    </lineage>
</organism>
<name>ATPF_NEIG2</name>
<feature type="chain" id="PRO_0000368620" description="ATP synthase subunit b">
    <location>
        <begin position="1"/>
        <end position="156"/>
    </location>
</feature>
<feature type="transmembrane region" description="Helical" evidence="1">
    <location>
        <begin position="7"/>
        <end position="27"/>
    </location>
</feature>